<proteinExistence type="inferred from homology"/>
<reference key="1">
    <citation type="online journal article" date="1995" name="Plant Gene Register">
        <title>Isolation of a class II metallothionein cDNA from Ricinus communis L.</title>
        <authorList>
            <person name="Weig A."/>
            <person name="Komor E."/>
        </authorList>
        <locator>PGR95-066</locator>
    </citation>
    <scope>NUCLEOTIDE SEQUENCE [MRNA]</scope>
</reference>
<feature type="chain" id="PRO_0000197409" description="Metallothionein-like protein type 2">
    <location>
        <begin position="1"/>
        <end position="80"/>
    </location>
</feature>
<keyword id="KW-0479">Metal-binding</keyword>
<keyword id="KW-0480">Metal-thiolate cluster</keyword>
<evidence type="ECO:0000305" key="1"/>
<gene>
    <name type="primary">MTI</name>
</gene>
<dbReference type="EMBL" id="L02306">
    <property type="protein sequence ID" value="AAC37473.1"/>
    <property type="molecule type" value="mRNA"/>
</dbReference>
<dbReference type="PIR" id="T10087">
    <property type="entry name" value="T10087"/>
</dbReference>
<dbReference type="RefSeq" id="XP_002532329.1">
    <property type="nucleotide sequence ID" value="XM_002532283.2"/>
</dbReference>
<dbReference type="GeneID" id="8268283"/>
<dbReference type="KEGG" id="rcu:8268283"/>
<dbReference type="eggNOG" id="KOG4738">
    <property type="taxonomic scope" value="Eukaryota"/>
</dbReference>
<dbReference type="OMA" id="APSNKGH"/>
<dbReference type="GO" id="GO:0046872">
    <property type="term" value="F:metal ion binding"/>
    <property type="evidence" value="ECO:0007669"/>
    <property type="project" value="UniProtKB-KW"/>
</dbReference>
<dbReference type="InterPro" id="IPR000347">
    <property type="entry name" value="Metalthion_15p"/>
</dbReference>
<dbReference type="PANTHER" id="PTHR33543">
    <property type="entry name" value="METALLOTHIONEIN-LIKE PROTEIN 2A"/>
    <property type="match status" value="1"/>
</dbReference>
<dbReference type="PANTHER" id="PTHR33543:SF33">
    <property type="entry name" value="METALLOTHIONEIN-LIKE PROTEIN 2B"/>
    <property type="match status" value="1"/>
</dbReference>
<dbReference type="Pfam" id="PF01439">
    <property type="entry name" value="Metallothio_2"/>
    <property type="match status" value="1"/>
</dbReference>
<organism>
    <name type="scientific">Ricinus communis</name>
    <name type="common">Castor bean</name>
    <dbReference type="NCBI Taxonomy" id="3988"/>
    <lineage>
        <taxon>Eukaryota</taxon>
        <taxon>Viridiplantae</taxon>
        <taxon>Streptophyta</taxon>
        <taxon>Embryophyta</taxon>
        <taxon>Tracheophyta</taxon>
        <taxon>Spermatophyta</taxon>
        <taxon>Magnoliopsida</taxon>
        <taxon>eudicotyledons</taxon>
        <taxon>Gunneridae</taxon>
        <taxon>Pentapetalae</taxon>
        <taxon>rosids</taxon>
        <taxon>fabids</taxon>
        <taxon>Malpighiales</taxon>
        <taxon>Euphorbiaceae</taxon>
        <taxon>Acalyphoideae</taxon>
        <taxon>Acalypheae</taxon>
        <taxon>Ricinus</taxon>
    </lineage>
</organism>
<comment type="function">
    <text>Metallothioneins have a high content of cysteine residues that bind various heavy metals.</text>
</comment>
<comment type="similarity">
    <text evidence="1">Belongs to the metallothionein superfamily. Type 15 family.</text>
</comment>
<accession>P30564</accession>
<sequence length="80" mass="7953">MSCCGGNCGCGSGCKCGNGCGGCKMYPDMSFSEKTTTETLVLGVGAEKAHFEGGEMGVVGAEEGGCKCGDNCTCNPCTCK</sequence>
<name>MT2_RICCO</name>
<protein>
    <recommendedName>
        <fullName>Metallothionein-like protein type 2</fullName>
    </recommendedName>
</protein>